<reference key="1">
    <citation type="submission" date="2007-10" db="EMBL/GenBank/DDBJ databases">
        <title>Complete sequence of Shewanella pealeana ATCC 700345.</title>
        <authorList>
            <consortium name="US DOE Joint Genome Institute"/>
            <person name="Copeland A."/>
            <person name="Lucas S."/>
            <person name="Lapidus A."/>
            <person name="Barry K."/>
            <person name="Glavina del Rio T."/>
            <person name="Dalin E."/>
            <person name="Tice H."/>
            <person name="Pitluck S."/>
            <person name="Chertkov O."/>
            <person name="Brettin T."/>
            <person name="Bruce D."/>
            <person name="Detter J.C."/>
            <person name="Han C."/>
            <person name="Schmutz J."/>
            <person name="Larimer F."/>
            <person name="Land M."/>
            <person name="Hauser L."/>
            <person name="Kyrpides N."/>
            <person name="Kim E."/>
            <person name="Zhao J.-S.Z."/>
            <person name="Manno D."/>
            <person name="Hawari J."/>
            <person name="Richardson P."/>
        </authorList>
    </citation>
    <scope>NUCLEOTIDE SEQUENCE [LARGE SCALE GENOMIC DNA]</scope>
    <source>
        <strain>ATCC 700345 / ANG-SQ1</strain>
    </source>
</reference>
<accession>A8H6L0</accession>
<proteinExistence type="inferred from homology"/>
<dbReference type="EC" id="1.1.1.267" evidence="1"/>
<dbReference type="EMBL" id="CP000851">
    <property type="protein sequence ID" value="ABV88197.1"/>
    <property type="molecule type" value="Genomic_DNA"/>
</dbReference>
<dbReference type="RefSeq" id="WP_012156102.1">
    <property type="nucleotide sequence ID" value="NC_009901.1"/>
</dbReference>
<dbReference type="SMR" id="A8H6L0"/>
<dbReference type="STRING" id="398579.Spea_2879"/>
<dbReference type="KEGG" id="spl:Spea_2879"/>
<dbReference type="eggNOG" id="COG0743">
    <property type="taxonomic scope" value="Bacteria"/>
</dbReference>
<dbReference type="HOGENOM" id="CLU_035714_4_0_6"/>
<dbReference type="OrthoDB" id="9806546at2"/>
<dbReference type="UniPathway" id="UPA00056">
    <property type="reaction ID" value="UER00092"/>
</dbReference>
<dbReference type="Proteomes" id="UP000002608">
    <property type="component" value="Chromosome"/>
</dbReference>
<dbReference type="GO" id="GO:0030604">
    <property type="term" value="F:1-deoxy-D-xylulose-5-phosphate reductoisomerase activity"/>
    <property type="evidence" value="ECO:0007669"/>
    <property type="project" value="UniProtKB-UniRule"/>
</dbReference>
<dbReference type="GO" id="GO:0030145">
    <property type="term" value="F:manganese ion binding"/>
    <property type="evidence" value="ECO:0007669"/>
    <property type="project" value="TreeGrafter"/>
</dbReference>
<dbReference type="GO" id="GO:0070402">
    <property type="term" value="F:NADPH binding"/>
    <property type="evidence" value="ECO:0007669"/>
    <property type="project" value="InterPro"/>
</dbReference>
<dbReference type="GO" id="GO:0051484">
    <property type="term" value="P:isopentenyl diphosphate biosynthetic process, methylerythritol 4-phosphate pathway involved in terpenoid biosynthetic process"/>
    <property type="evidence" value="ECO:0007669"/>
    <property type="project" value="TreeGrafter"/>
</dbReference>
<dbReference type="FunFam" id="1.10.1740.10:FF:000004">
    <property type="entry name" value="1-deoxy-D-xylulose 5-phosphate reductoisomerase"/>
    <property type="match status" value="1"/>
</dbReference>
<dbReference type="FunFam" id="3.40.50.720:FF:000045">
    <property type="entry name" value="1-deoxy-D-xylulose 5-phosphate reductoisomerase"/>
    <property type="match status" value="1"/>
</dbReference>
<dbReference type="Gene3D" id="1.10.1740.10">
    <property type="match status" value="1"/>
</dbReference>
<dbReference type="Gene3D" id="3.40.50.720">
    <property type="entry name" value="NAD(P)-binding Rossmann-like Domain"/>
    <property type="match status" value="1"/>
</dbReference>
<dbReference type="HAMAP" id="MF_00183">
    <property type="entry name" value="DXP_reductoisom"/>
    <property type="match status" value="1"/>
</dbReference>
<dbReference type="InterPro" id="IPR003821">
    <property type="entry name" value="DXP_reductoisomerase"/>
</dbReference>
<dbReference type="InterPro" id="IPR013644">
    <property type="entry name" value="DXP_reductoisomerase_C"/>
</dbReference>
<dbReference type="InterPro" id="IPR013512">
    <property type="entry name" value="DXP_reductoisomerase_N"/>
</dbReference>
<dbReference type="InterPro" id="IPR026877">
    <property type="entry name" value="DXPR_C"/>
</dbReference>
<dbReference type="InterPro" id="IPR036169">
    <property type="entry name" value="DXPR_C_sf"/>
</dbReference>
<dbReference type="InterPro" id="IPR036291">
    <property type="entry name" value="NAD(P)-bd_dom_sf"/>
</dbReference>
<dbReference type="NCBIfam" id="TIGR00243">
    <property type="entry name" value="Dxr"/>
    <property type="match status" value="1"/>
</dbReference>
<dbReference type="NCBIfam" id="NF003938">
    <property type="entry name" value="PRK05447.1-1"/>
    <property type="match status" value="1"/>
</dbReference>
<dbReference type="NCBIfam" id="NF009114">
    <property type="entry name" value="PRK12464.1"/>
    <property type="match status" value="1"/>
</dbReference>
<dbReference type="PANTHER" id="PTHR30525">
    <property type="entry name" value="1-DEOXY-D-XYLULOSE 5-PHOSPHATE REDUCTOISOMERASE"/>
    <property type="match status" value="1"/>
</dbReference>
<dbReference type="PANTHER" id="PTHR30525:SF0">
    <property type="entry name" value="1-DEOXY-D-XYLULOSE 5-PHOSPHATE REDUCTOISOMERASE, CHLOROPLASTIC"/>
    <property type="match status" value="1"/>
</dbReference>
<dbReference type="Pfam" id="PF08436">
    <property type="entry name" value="DXP_redisom_C"/>
    <property type="match status" value="1"/>
</dbReference>
<dbReference type="Pfam" id="PF02670">
    <property type="entry name" value="DXP_reductoisom"/>
    <property type="match status" value="1"/>
</dbReference>
<dbReference type="Pfam" id="PF13288">
    <property type="entry name" value="DXPR_C"/>
    <property type="match status" value="1"/>
</dbReference>
<dbReference type="PIRSF" id="PIRSF006205">
    <property type="entry name" value="Dxp_reductismrs"/>
    <property type="match status" value="1"/>
</dbReference>
<dbReference type="SUPFAM" id="SSF69055">
    <property type="entry name" value="1-deoxy-D-xylulose-5-phosphate reductoisomerase, C-terminal domain"/>
    <property type="match status" value="1"/>
</dbReference>
<dbReference type="SUPFAM" id="SSF55347">
    <property type="entry name" value="Glyceraldehyde-3-phosphate dehydrogenase-like, C-terminal domain"/>
    <property type="match status" value="1"/>
</dbReference>
<dbReference type="SUPFAM" id="SSF51735">
    <property type="entry name" value="NAD(P)-binding Rossmann-fold domains"/>
    <property type="match status" value="1"/>
</dbReference>
<comment type="function">
    <text evidence="1">Catalyzes the NADPH-dependent rearrangement and reduction of 1-deoxy-D-xylulose-5-phosphate (DXP) to 2-C-methyl-D-erythritol 4-phosphate (MEP).</text>
</comment>
<comment type="catalytic activity">
    <reaction evidence="1">
        <text>2-C-methyl-D-erythritol 4-phosphate + NADP(+) = 1-deoxy-D-xylulose 5-phosphate + NADPH + H(+)</text>
        <dbReference type="Rhea" id="RHEA:13717"/>
        <dbReference type="ChEBI" id="CHEBI:15378"/>
        <dbReference type="ChEBI" id="CHEBI:57783"/>
        <dbReference type="ChEBI" id="CHEBI:57792"/>
        <dbReference type="ChEBI" id="CHEBI:58262"/>
        <dbReference type="ChEBI" id="CHEBI:58349"/>
        <dbReference type="EC" id="1.1.1.267"/>
    </reaction>
    <physiologicalReaction direction="right-to-left" evidence="1">
        <dbReference type="Rhea" id="RHEA:13719"/>
    </physiologicalReaction>
</comment>
<comment type="cofactor">
    <cofactor evidence="1">
        <name>Mg(2+)</name>
        <dbReference type="ChEBI" id="CHEBI:18420"/>
    </cofactor>
    <cofactor evidence="1">
        <name>Mn(2+)</name>
        <dbReference type="ChEBI" id="CHEBI:29035"/>
    </cofactor>
</comment>
<comment type="pathway">
    <text evidence="1">Isoprenoid biosynthesis; isopentenyl diphosphate biosynthesis via DXP pathway; isopentenyl diphosphate from 1-deoxy-D-xylulose 5-phosphate: step 1/6.</text>
</comment>
<comment type="similarity">
    <text evidence="1">Belongs to the DXR family.</text>
</comment>
<sequence length="396" mass="42727">MQNMVILGATGSIGASTLNVVACNPEQYKVFALVANTNVAKMLEICIAHQPKIAHMVDAKAAQALKQQLPSHLKIEVTTGEDELLSLVSCSEVDTVMAAIVGAAGLPSTLAAVNAGKRVLLANKESLVMSGQLFIEAMQNSGAQVLPVDSEHNAIFQCLSERSQLEIGRCDLTGAGVSHILLTGSGGPFLTSDLSSLVNMTPDQACKHPNWSMGRKISVDSATMMNKGLEYIEARWLFNASSDQLKVVIHPQSVIHSMVQYRDGSVLAQLGNPDMRTPIAHCMSFPQRISSGVEPLDFFKVGQLSFLEPDFNRFPCLALAIEACKQGQEATTVLNAANEISVQAFLDGKIRFTDIAKINEQSLMNTATHPLNCIDDILALDFQSRQYTLNAITKLN</sequence>
<organism>
    <name type="scientific">Shewanella pealeana (strain ATCC 700345 / ANG-SQ1)</name>
    <dbReference type="NCBI Taxonomy" id="398579"/>
    <lineage>
        <taxon>Bacteria</taxon>
        <taxon>Pseudomonadati</taxon>
        <taxon>Pseudomonadota</taxon>
        <taxon>Gammaproteobacteria</taxon>
        <taxon>Alteromonadales</taxon>
        <taxon>Shewanellaceae</taxon>
        <taxon>Shewanella</taxon>
    </lineage>
</organism>
<protein>
    <recommendedName>
        <fullName evidence="1">1-deoxy-D-xylulose 5-phosphate reductoisomerase</fullName>
        <shortName evidence="1">DXP reductoisomerase</shortName>
        <ecNumber evidence="1">1.1.1.267</ecNumber>
    </recommendedName>
    <alternativeName>
        <fullName evidence="1">1-deoxyxylulose-5-phosphate reductoisomerase</fullName>
    </alternativeName>
    <alternativeName>
        <fullName evidence="1">2-C-methyl-D-erythritol 4-phosphate synthase</fullName>
    </alternativeName>
</protein>
<name>DXR_SHEPA</name>
<feature type="chain" id="PRO_1000077344" description="1-deoxy-D-xylulose 5-phosphate reductoisomerase">
    <location>
        <begin position="1"/>
        <end position="396"/>
    </location>
</feature>
<feature type="binding site" evidence="1">
    <location>
        <position position="10"/>
    </location>
    <ligand>
        <name>NADPH</name>
        <dbReference type="ChEBI" id="CHEBI:57783"/>
    </ligand>
</feature>
<feature type="binding site" evidence="1">
    <location>
        <position position="11"/>
    </location>
    <ligand>
        <name>NADPH</name>
        <dbReference type="ChEBI" id="CHEBI:57783"/>
    </ligand>
</feature>
<feature type="binding site" evidence="1">
    <location>
        <position position="12"/>
    </location>
    <ligand>
        <name>NADPH</name>
        <dbReference type="ChEBI" id="CHEBI:57783"/>
    </ligand>
</feature>
<feature type="binding site" evidence="1">
    <location>
        <position position="13"/>
    </location>
    <ligand>
        <name>NADPH</name>
        <dbReference type="ChEBI" id="CHEBI:57783"/>
    </ligand>
</feature>
<feature type="binding site" evidence="1">
    <location>
        <position position="38"/>
    </location>
    <ligand>
        <name>NADPH</name>
        <dbReference type="ChEBI" id="CHEBI:57783"/>
    </ligand>
</feature>
<feature type="binding site" evidence="1">
    <location>
        <position position="123"/>
    </location>
    <ligand>
        <name>NADPH</name>
        <dbReference type="ChEBI" id="CHEBI:57783"/>
    </ligand>
</feature>
<feature type="binding site" evidence="1">
    <location>
        <position position="124"/>
    </location>
    <ligand>
        <name>1-deoxy-D-xylulose 5-phosphate</name>
        <dbReference type="ChEBI" id="CHEBI:57792"/>
    </ligand>
</feature>
<feature type="binding site" evidence="1">
    <location>
        <position position="125"/>
    </location>
    <ligand>
        <name>NADPH</name>
        <dbReference type="ChEBI" id="CHEBI:57783"/>
    </ligand>
</feature>
<feature type="binding site" evidence="1">
    <location>
        <position position="149"/>
    </location>
    <ligand>
        <name>Mn(2+)</name>
        <dbReference type="ChEBI" id="CHEBI:29035"/>
    </ligand>
</feature>
<feature type="binding site" evidence="1">
    <location>
        <position position="150"/>
    </location>
    <ligand>
        <name>1-deoxy-D-xylulose 5-phosphate</name>
        <dbReference type="ChEBI" id="CHEBI:57792"/>
    </ligand>
</feature>
<feature type="binding site" evidence="1">
    <location>
        <position position="151"/>
    </location>
    <ligand>
        <name>1-deoxy-D-xylulose 5-phosphate</name>
        <dbReference type="ChEBI" id="CHEBI:57792"/>
    </ligand>
</feature>
<feature type="binding site" evidence="1">
    <location>
        <position position="151"/>
    </location>
    <ligand>
        <name>Mn(2+)</name>
        <dbReference type="ChEBI" id="CHEBI:29035"/>
    </ligand>
</feature>
<feature type="binding site" evidence="1">
    <location>
        <position position="185"/>
    </location>
    <ligand>
        <name>1-deoxy-D-xylulose 5-phosphate</name>
        <dbReference type="ChEBI" id="CHEBI:57792"/>
    </ligand>
</feature>
<feature type="binding site" evidence="1">
    <location>
        <position position="208"/>
    </location>
    <ligand>
        <name>1-deoxy-D-xylulose 5-phosphate</name>
        <dbReference type="ChEBI" id="CHEBI:57792"/>
    </ligand>
</feature>
<feature type="binding site" evidence="1">
    <location>
        <position position="214"/>
    </location>
    <ligand>
        <name>NADPH</name>
        <dbReference type="ChEBI" id="CHEBI:57783"/>
    </ligand>
</feature>
<feature type="binding site" evidence="1">
    <location>
        <position position="221"/>
    </location>
    <ligand>
        <name>1-deoxy-D-xylulose 5-phosphate</name>
        <dbReference type="ChEBI" id="CHEBI:57792"/>
    </ligand>
</feature>
<feature type="binding site" evidence="1">
    <location>
        <position position="226"/>
    </location>
    <ligand>
        <name>1-deoxy-D-xylulose 5-phosphate</name>
        <dbReference type="ChEBI" id="CHEBI:57792"/>
    </ligand>
</feature>
<feature type="binding site" evidence="1">
    <location>
        <position position="227"/>
    </location>
    <ligand>
        <name>1-deoxy-D-xylulose 5-phosphate</name>
        <dbReference type="ChEBI" id="CHEBI:57792"/>
    </ligand>
</feature>
<feature type="binding site" evidence="1">
    <location>
        <position position="230"/>
    </location>
    <ligand>
        <name>1-deoxy-D-xylulose 5-phosphate</name>
        <dbReference type="ChEBI" id="CHEBI:57792"/>
    </ligand>
</feature>
<feature type="binding site" evidence="1">
    <location>
        <position position="230"/>
    </location>
    <ligand>
        <name>Mn(2+)</name>
        <dbReference type="ChEBI" id="CHEBI:29035"/>
    </ligand>
</feature>
<gene>
    <name evidence="1" type="primary">dxr</name>
    <name type="ordered locus">Spea_2879</name>
</gene>
<keyword id="KW-0414">Isoprene biosynthesis</keyword>
<keyword id="KW-0464">Manganese</keyword>
<keyword id="KW-0479">Metal-binding</keyword>
<keyword id="KW-0521">NADP</keyword>
<keyword id="KW-0560">Oxidoreductase</keyword>
<keyword id="KW-1185">Reference proteome</keyword>
<evidence type="ECO:0000255" key="1">
    <source>
        <dbReference type="HAMAP-Rule" id="MF_00183"/>
    </source>
</evidence>